<name>SYV_EHRRW</name>
<keyword id="KW-0030">Aminoacyl-tRNA synthetase</keyword>
<keyword id="KW-0067">ATP-binding</keyword>
<keyword id="KW-0963">Cytoplasm</keyword>
<keyword id="KW-0436">Ligase</keyword>
<keyword id="KW-0547">Nucleotide-binding</keyword>
<keyword id="KW-0648">Protein biosynthesis</keyword>
<gene>
    <name evidence="1" type="primary">valS</name>
    <name type="ordered locus">Erum0780</name>
    <name type="ordered locus">ERWE_CDS_00710</name>
</gene>
<dbReference type="EC" id="6.1.1.9" evidence="1"/>
<dbReference type="EMBL" id="CR767821">
    <property type="protein sequence ID" value="CAH57790.1"/>
    <property type="molecule type" value="Genomic_DNA"/>
</dbReference>
<dbReference type="EMBL" id="CR925678">
    <property type="protein sequence ID" value="CAI26565.1"/>
    <property type="status" value="ALT_INIT"/>
    <property type="molecule type" value="Genomic_DNA"/>
</dbReference>
<dbReference type="RefSeq" id="WP_011154761.1">
    <property type="nucleotide sequence ID" value="NC_005295.2"/>
</dbReference>
<dbReference type="SMR" id="Q5HC99"/>
<dbReference type="GeneID" id="33058226"/>
<dbReference type="KEGG" id="eru:Erum0780"/>
<dbReference type="KEGG" id="erw:ERWE_CDS_00710"/>
<dbReference type="eggNOG" id="COG0525">
    <property type="taxonomic scope" value="Bacteria"/>
</dbReference>
<dbReference type="HOGENOM" id="CLU_001493_0_2_5"/>
<dbReference type="Proteomes" id="UP000001021">
    <property type="component" value="Chromosome"/>
</dbReference>
<dbReference type="GO" id="GO:0005829">
    <property type="term" value="C:cytosol"/>
    <property type="evidence" value="ECO:0007669"/>
    <property type="project" value="TreeGrafter"/>
</dbReference>
<dbReference type="GO" id="GO:0002161">
    <property type="term" value="F:aminoacyl-tRNA deacylase activity"/>
    <property type="evidence" value="ECO:0007669"/>
    <property type="project" value="InterPro"/>
</dbReference>
<dbReference type="GO" id="GO:0005524">
    <property type="term" value="F:ATP binding"/>
    <property type="evidence" value="ECO:0007669"/>
    <property type="project" value="UniProtKB-UniRule"/>
</dbReference>
<dbReference type="GO" id="GO:0004832">
    <property type="term" value="F:valine-tRNA ligase activity"/>
    <property type="evidence" value="ECO:0007669"/>
    <property type="project" value="UniProtKB-UniRule"/>
</dbReference>
<dbReference type="GO" id="GO:0006438">
    <property type="term" value="P:valyl-tRNA aminoacylation"/>
    <property type="evidence" value="ECO:0007669"/>
    <property type="project" value="UniProtKB-UniRule"/>
</dbReference>
<dbReference type="CDD" id="cd07962">
    <property type="entry name" value="Anticodon_Ia_Val"/>
    <property type="match status" value="1"/>
</dbReference>
<dbReference type="FunFam" id="3.40.50.620:FF:000192">
    <property type="entry name" value="Valine--tRNA ligase"/>
    <property type="match status" value="1"/>
</dbReference>
<dbReference type="Gene3D" id="3.40.50.620">
    <property type="entry name" value="HUPs"/>
    <property type="match status" value="2"/>
</dbReference>
<dbReference type="Gene3D" id="1.10.730.10">
    <property type="entry name" value="Isoleucyl-tRNA Synthetase, Domain 1"/>
    <property type="match status" value="1"/>
</dbReference>
<dbReference type="HAMAP" id="MF_02005">
    <property type="entry name" value="Val_tRNA_synth_type2"/>
    <property type="match status" value="1"/>
</dbReference>
<dbReference type="InterPro" id="IPR001412">
    <property type="entry name" value="aa-tRNA-synth_I_CS"/>
</dbReference>
<dbReference type="InterPro" id="IPR002300">
    <property type="entry name" value="aa-tRNA-synth_Ia"/>
</dbReference>
<dbReference type="InterPro" id="IPR033705">
    <property type="entry name" value="Anticodon_Ia_Val"/>
</dbReference>
<dbReference type="InterPro" id="IPR013155">
    <property type="entry name" value="M/V/L/I-tRNA-synth_anticd-bd"/>
</dbReference>
<dbReference type="InterPro" id="IPR014729">
    <property type="entry name" value="Rossmann-like_a/b/a_fold"/>
</dbReference>
<dbReference type="InterPro" id="IPR009080">
    <property type="entry name" value="tRNAsynth_Ia_anticodon-bd"/>
</dbReference>
<dbReference type="InterPro" id="IPR009008">
    <property type="entry name" value="Val/Leu/Ile-tRNA-synth_edit"/>
</dbReference>
<dbReference type="InterPro" id="IPR022874">
    <property type="entry name" value="Valine-tRNA_ligase_type_2"/>
</dbReference>
<dbReference type="InterPro" id="IPR002303">
    <property type="entry name" value="Valyl-tRNA_ligase"/>
</dbReference>
<dbReference type="NCBIfam" id="NF009687">
    <property type="entry name" value="PRK13208.1"/>
    <property type="match status" value="1"/>
</dbReference>
<dbReference type="NCBIfam" id="TIGR00422">
    <property type="entry name" value="valS"/>
    <property type="match status" value="1"/>
</dbReference>
<dbReference type="PANTHER" id="PTHR11946:SF93">
    <property type="entry name" value="VALINE--TRNA LIGASE, CHLOROPLASTIC_MITOCHONDRIAL 2"/>
    <property type="match status" value="1"/>
</dbReference>
<dbReference type="PANTHER" id="PTHR11946">
    <property type="entry name" value="VALYL-TRNA SYNTHETASES"/>
    <property type="match status" value="1"/>
</dbReference>
<dbReference type="Pfam" id="PF08264">
    <property type="entry name" value="Anticodon_1"/>
    <property type="match status" value="1"/>
</dbReference>
<dbReference type="Pfam" id="PF00133">
    <property type="entry name" value="tRNA-synt_1"/>
    <property type="match status" value="1"/>
</dbReference>
<dbReference type="PRINTS" id="PR00986">
    <property type="entry name" value="TRNASYNTHVAL"/>
</dbReference>
<dbReference type="SUPFAM" id="SSF47323">
    <property type="entry name" value="Anticodon-binding domain of a subclass of class I aminoacyl-tRNA synthetases"/>
    <property type="match status" value="1"/>
</dbReference>
<dbReference type="SUPFAM" id="SSF52374">
    <property type="entry name" value="Nucleotidylyl transferase"/>
    <property type="match status" value="1"/>
</dbReference>
<dbReference type="SUPFAM" id="SSF50677">
    <property type="entry name" value="ValRS/IleRS/LeuRS editing domain"/>
    <property type="match status" value="1"/>
</dbReference>
<dbReference type="PROSITE" id="PS00178">
    <property type="entry name" value="AA_TRNA_LIGASE_I"/>
    <property type="match status" value="1"/>
</dbReference>
<reference key="1">
    <citation type="journal article" date="2005" name="Proc. Natl. Acad. Sci. U.S.A.">
        <title>The genome of the heartwater agent Ehrlichia ruminantium contains multiple tandem repeats of actively variable copy number.</title>
        <authorList>
            <person name="Collins N.E."/>
            <person name="Liebenberg J."/>
            <person name="de Villiers E.P."/>
            <person name="Brayton K.A."/>
            <person name="Louw E."/>
            <person name="Pretorius A."/>
            <person name="Faber F.E."/>
            <person name="van Heerden H."/>
            <person name="Josemans A."/>
            <person name="van Kleef M."/>
            <person name="Steyn H.C."/>
            <person name="van Strijp M.F."/>
            <person name="Zweygarth E."/>
            <person name="Jongejan F."/>
            <person name="Maillard J.C."/>
            <person name="Berthier D."/>
            <person name="Botha M."/>
            <person name="Joubert F."/>
            <person name="Corton C.H."/>
            <person name="Thomson N.R."/>
            <person name="Allsopp M.T."/>
            <person name="Allsopp B.A."/>
        </authorList>
    </citation>
    <scope>NUCLEOTIDE SEQUENCE [LARGE SCALE GENOMIC DNA]</scope>
    <source>
        <strain>Welgevonden</strain>
    </source>
</reference>
<reference key="2">
    <citation type="journal article" date="2006" name="J. Bacteriol.">
        <title>Comparative genomic analysis of three strains of Ehrlichia ruminantium reveals an active process of genome size plasticity.</title>
        <authorList>
            <person name="Frutos R."/>
            <person name="Viari A."/>
            <person name="Ferraz C."/>
            <person name="Morgat A."/>
            <person name="Eychenie S."/>
            <person name="Kandassamy Y."/>
            <person name="Chantal I."/>
            <person name="Bensaid A."/>
            <person name="Coissac E."/>
            <person name="Vachiery N."/>
            <person name="Demaille J."/>
            <person name="Martinez D."/>
        </authorList>
    </citation>
    <scope>NUCLEOTIDE SEQUENCE [LARGE SCALE GENOMIC DNA]</scope>
    <source>
        <strain>Welgevonden</strain>
    </source>
</reference>
<sequence>MQSLFSNKYKFKDTEEKLNAYWDKIKLYKWKNLQGKQFIIDTPPPTISGQLHIGHVFSYCHTDFIARYQRMLGKDVLYPIGFDDNGLPTERLVEKIKKVRAADIDRKEFKALCNEVSAKFRMEFKILFQSLGISYDWDLEYHTISEEIQKLSQMSFIALYNMGKIYRKLQPIFWDCADRTAIARVEVEEKEMSSFMSTIAFSTEAGELINIATTRPELMPACVALFFNPLDIRYQHLQGQYAIVPIFGNKVPILSDEQVKIDKGTGLVMCCTFGDELDVYWWNKHNLNTQIIISKSGTLDLKHNIAETDTLSGKLHGVSIVEARKLVLETLSKCNLLIKKEEILHNVKCAERSGMPIEILLSNQWFIKVVEIKHELLEQVRKINWYPQSMRKQIEMWIDGLNWDWCISRQRYFGIPFPVWYSKRDNEEIIIPDVNELPIDPTETLPQGYSKEEVEADVDVMDTWATSSLSPQFNSIHTGINSIPLIPASLRAQSHEIIRSWAFYTILQAYYHHNSIPWENIMVSGWCLAADKSKMSKSKGNALIPNQLLQEYGADVIRYWAANSRLGSDTVFSDEVLQLGKRLVTKLWNASKFVSMFVSQCQIPDLNCVTETMDKWVLTKLYKVIVKATESFNVFEYCVALDYIESFFWKDFCDNYLELVKKRAYGESVTNKENLSAVNTLSFVLMALLKMLAPFMPYITEEIYSTLYNNGSIHDHDNWPVVNTSLCNEMDEQLGEDFIEILNQVRKIKANAQLSVKCKIYKLIINSENYDFPTSWENDLKAVCNAEHIVQDKRTSYYNDKFLISVQFAN</sequence>
<comment type="function">
    <text evidence="1">Catalyzes the attachment of valine to tRNA(Val). As ValRS can inadvertently accommodate and process structurally similar amino acids such as threonine, to avoid such errors, it has a 'posttransfer' editing activity that hydrolyzes mischarged Thr-tRNA(Val) in a tRNA-dependent manner.</text>
</comment>
<comment type="catalytic activity">
    <reaction evidence="1">
        <text>tRNA(Val) + L-valine + ATP = L-valyl-tRNA(Val) + AMP + diphosphate</text>
        <dbReference type="Rhea" id="RHEA:10704"/>
        <dbReference type="Rhea" id="RHEA-COMP:9672"/>
        <dbReference type="Rhea" id="RHEA-COMP:9708"/>
        <dbReference type="ChEBI" id="CHEBI:30616"/>
        <dbReference type="ChEBI" id="CHEBI:33019"/>
        <dbReference type="ChEBI" id="CHEBI:57762"/>
        <dbReference type="ChEBI" id="CHEBI:78442"/>
        <dbReference type="ChEBI" id="CHEBI:78537"/>
        <dbReference type="ChEBI" id="CHEBI:456215"/>
        <dbReference type="EC" id="6.1.1.9"/>
    </reaction>
</comment>
<comment type="subunit">
    <text evidence="1">Monomer.</text>
</comment>
<comment type="subcellular location">
    <subcellularLocation>
        <location evidence="1">Cytoplasm</location>
    </subcellularLocation>
</comment>
<comment type="domain">
    <text evidence="1">ValRS has two distinct active sites: one for aminoacylation and one for editing. The misactivated threonine is translocated from the active site to the editing site.</text>
</comment>
<comment type="similarity">
    <text evidence="1">Belongs to the class-I aminoacyl-tRNA synthetase family. ValS type 2 subfamily.</text>
</comment>
<comment type="sequence caution" evidence="2">
    <conflict type="erroneous initiation">
        <sequence resource="EMBL-CDS" id="CAI26565"/>
    </conflict>
</comment>
<accession>Q5HC99</accession>
<accession>Q5FCN8</accession>
<evidence type="ECO:0000255" key="1">
    <source>
        <dbReference type="HAMAP-Rule" id="MF_02005"/>
    </source>
</evidence>
<evidence type="ECO:0000305" key="2"/>
<organism>
    <name type="scientific">Ehrlichia ruminantium (strain Welgevonden)</name>
    <dbReference type="NCBI Taxonomy" id="254945"/>
    <lineage>
        <taxon>Bacteria</taxon>
        <taxon>Pseudomonadati</taxon>
        <taxon>Pseudomonadota</taxon>
        <taxon>Alphaproteobacteria</taxon>
        <taxon>Rickettsiales</taxon>
        <taxon>Anaplasmataceae</taxon>
        <taxon>Ehrlichia</taxon>
    </lineage>
</organism>
<feature type="chain" id="PRO_0000224610" description="Valine--tRNA ligase">
    <location>
        <begin position="1"/>
        <end position="810"/>
    </location>
</feature>
<feature type="short sequence motif" description="'HIGH' region">
    <location>
        <begin position="45"/>
        <end position="55"/>
    </location>
</feature>
<feature type="short sequence motif" description="'KMSKS' region">
    <location>
        <begin position="534"/>
        <end position="538"/>
    </location>
</feature>
<feature type="binding site" evidence="1">
    <location>
        <position position="537"/>
    </location>
    <ligand>
        <name>ATP</name>
        <dbReference type="ChEBI" id="CHEBI:30616"/>
    </ligand>
</feature>
<proteinExistence type="inferred from homology"/>
<protein>
    <recommendedName>
        <fullName evidence="1">Valine--tRNA ligase</fullName>
        <ecNumber evidence="1">6.1.1.9</ecNumber>
    </recommendedName>
    <alternativeName>
        <fullName evidence="1">Valyl-tRNA synthetase</fullName>
        <shortName evidence="1">ValRS</shortName>
    </alternativeName>
</protein>